<organism>
    <name type="scientific">Pseudomonas aeruginosa (strain ATCC 15692 / DSM 22644 / CIP 104116 / JCM 14847 / LMG 12228 / 1C / PRS 101 / PAO1)</name>
    <dbReference type="NCBI Taxonomy" id="208964"/>
    <lineage>
        <taxon>Bacteria</taxon>
        <taxon>Pseudomonadati</taxon>
        <taxon>Pseudomonadota</taxon>
        <taxon>Gammaproteobacteria</taxon>
        <taxon>Pseudomonadales</taxon>
        <taxon>Pseudomonadaceae</taxon>
        <taxon>Pseudomonas</taxon>
    </lineage>
</organism>
<sequence>MNRTYDIVIAGGGVIGASCAYQLSRRGNLRIAVVDDKRPGNATRASAGGLWAIGESVGLGCGVIFFRMMSSRNRREAQGAAVAVDASTPHILPPAFFDLALQSNALYPELHRELIERHGMDFKFERTGLKYVIQDDEDRQYAEHIVAQIPHLAEQVRWLDREELRRAEPAVSHAAHGALEFLCDHQVSPFRLADAYLEAARQNGVELLPGTNVTGVLRQGRRISGVRTDNAGVLHCRTLINAAGAWAAELSEMATGRRIPVKPVKGQIVLTERMPRLLNGCLTTSDCYMAQKDNGEILIGSTTEDKGFDVSNTFPEIAGLVQGAVRCVPELQQVNLKRTWAGLRPGSPDELPILGPVAEVEGYLNACGHFRTGILTSAITGVLLDRLVHEETLPLDIAPFLAARFQPEPAAVAVAAC</sequence>
<name>HCNC_PSEAE</name>
<comment type="function">
    <text evidence="3 4 5 6 8">A three-component membrane-bound flavoenzyme that catalyzes the formation of hydrogen cyanide, a secondary metabolite, by transfer of electrons to a cyanide-resistant branch of the aerobic respiratory chain.</text>
</comment>
<comment type="catalytic activity">
    <reaction evidence="3 6">
        <text>glycine + 2 A = hydrogen cyanide + 2 AH2 + CO2</text>
        <dbReference type="Rhea" id="RHEA:15821"/>
        <dbReference type="ChEBI" id="CHEBI:13193"/>
        <dbReference type="ChEBI" id="CHEBI:16526"/>
        <dbReference type="ChEBI" id="CHEBI:17499"/>
        <dbReference type="ChEBI" id="CHEBI:18407"/>
        <dbReference type="ChEBI" id="CHEBI:57305"/>
        <dbReference type="EC" id="1.4.99.5"/>
    </reaction>
</comment>
<comment type="cofactor">
    <cofactor evidence="11 12">
        <name>FAD</name>
        <dbReference type="ChEBI" id="CHEBI:57692"/>
    </cofactor>
</comment>
<comment type="activity regulation">
    <text evidence="8 9">Oxygen is necessary for cyanogenesis. Activated by succinate, glycine methyl ester, glucose and D,L-methionine in addition to glycine. Phenazine methosulfate, methylene blue, 2,6-dichlorophenolindophenol (DCIP) and ferricyanide can replace oxygen for the reaction. Inhibited by pyrrolnitrin and acriflavine at 1 mM concentration.</text>
</comment>
<comment type="biophysicochemical properties">
    <kinetics>
        <KM evidence="7 8 9">50 mM for glycine</KM>
        <text evidence="8">Measured for the whole complex.</text>
    </kinetics>
    <phDependence>
        <text evidence="7 8 9">Optimum pH is 8.3 (in the presence of Tris-HCl). Active from 7.3-7.8 in the presence of other buffers.</text>
    </phDependence>
    <temperatureDependence>
        <text evidence="7 8 9">Not stable at 0 degrees Celsius. Decrease in activity up to 40% immediately after freeze-drying procedure, with a further decrease up to 10% when stored at -10 degrees Celsius.</text>
    </temperatureDependence>
</comment>
<comment type="subunit">
    <text evidence="12">Heterotrimer of HcnA, HcnB and HcnC.</text>
</comment>
<comment type="subcellular location">
    <subcellularLocation>
        <location evidence="2 7">Cell membrane</location>
    </subcellularLocation>
    <subcellularLocation>
        <location evidence="2">Cell membrane</location>
        <topology evidence="1">Single-pass membrane protein</topology>
    </subcellularLocation>
    <subcellularLocation>
        <location evidence="2">Cell membrane</location>
        <topology evidence="2">Lipid-anchor</topology>
    </subcellularLocation>
</comment>
<comment type="induction">
    <text evidence="4">Reduced oxygen levels.</text>
</comment>
<comment type="similarity">
    <text evidence="1">Belongs to the FAD-dependent glycerol-3-phosphate dehydrogenase family.</text>
</comment>
<dbReference type="EC" id="1.4.99.5" evidence="3 6"/>
<dbReference type="EMBL" id="AF208523">
    <property type="protein sequence ID" value="AAF21030.1"/>
    <property type="molecule type" value="Genomic_DNA"/>
</dbReference>
<dbReference type="EMBL" id="AE004091">
    <property type="protein sequence ID" value="AAG05583.1"/>
    <property type="molecule type" value="Genomic_DNA"/>
</dbReference>
<dbReference type="PIR" id="H83370">
    <property type="entry name" value="H83370"/>
</dbReference>
<dbReference type="RefSeq" id="NP_250885.1">
    <property type="nucleotide sequence ID" value="NC_002516.2"/>
</dbReference>
<dbReference type="RefSeq" id="WP_003113686.1">
    <property type="nucleotide sequence ID" value="NZ_QZGE01000014.1"/>
</dbReference>
<dbReference type="SMR" id="G3XD12"/>
<dbReference type="STRING" id="208964.PA2195"/>
<dbReference type="PaxDb" id="208964-PA2195"/>
<dbReference type="GeneID" id="882196"/>
<dbReference type="KEGG" id="pae:PA2195"/>
<dbReference type="PATRIC" id="fig|208964.12.peg.2299"/>
<dbReference type="PseudoCAP" id="PA2195"/>
<dbReference type="HOGENOM" id="CLU_007884_4_5_6"/>
<dbReference type="InParanoid" id="G3XD12"/>
<dbReference type="OrthoDB" id="9805337at2"/>
<dbReference type="PhylomeDB" id="G3XD12"/>
<dbReference type="BioCyc" id="PAER208964:G1FZ6-2235-MONOMER"/>
<dbReference type="Proteomes" id="UP000002438">
    <property type="component" value="Chromosome"/>
</dbReference>
<dbReference type="GO" id="GO:0005737">
    <property type="term" value="C:cytoplasm"/>
    <property type="evidence" value="ECO:0000318"/>
    <property type="project" value="GO_Central"/>
</dbReference>
<dbReference type="GO" id="GO:0005886">
    <property type="term" value="C:plasma membrane"/>
    <property type="evidence" value="ECO:0007669"/>
    <property type="project" value="UniProtKB-SubCell"/>
</dbReference>
<dbReference type="GO" id="GO:0050622">
    <property type="term" value="F:glycine dehydrogenase (cyanide-forming) activity"/>
    <property type="evidence" value="ECO:0007669"/>
    <property type="project" value="UniProtKB-EC"/>
</dbReference>
<dbReference type="Gene3D" id="3.30.9.10">
    <property type="entry name" value="D-Amino Acid Oxidase, subunit A, domain 2"/>
    <property type="match status" value="1"/>
</dbReference>
<dbReference type="Gene3D" id="3.50.50.60">
    <property type="entry name" value="FAD/NAD(P)-binding domain"/>
    <property type="match status" value="2"/>
</dbReference>
<dbReference type="InterPro" id="IPR006076">
    <property type="entry name" value="FAD-dep_OxRdtase"/>
</dbReference>
<dbReference type="InterPro" id="IPR036188">
    <property type="entry name" value="FAD/NAD-bd_sf"/>
</dbReference>
<dbReference type="PANTHER" id="PTHR13847:SF289">
    <property type="entry name" value="GLYCINE OXIDASE"/>
    <property type="match status" value="1"/>
</dbReference>
<dbReference type="PANTHER" id="PTHR13847">
    <property type="entry name" value="SARCOSINE DEHYDROGENASE-RELATED"/>
    <property type="match status" value="1"/>
</dbReference>
<dbReference type="Pfam" id="PF01266">
    <property type="entry name" value="DAO"/>
    <property type="match status" value="1"/>
</dbReference>
<dbReference type="SUPFAM" id="SSF54373">
    <property type="entry name" value="FAD-linked reductases, C-terminal domain"/>
    <property type="match status" value="1"/>
</dbReference>
<dbReference type="SUPFAM" id="SSF51905">
    <property type="entry name" value="FAD/NAD(P)-binding domain"/>
    <property type="match status" value="1"/>
</dbReference>
<dbReference type="PROSITE" id="PS51257">
    <property type="entry name" value="PROKAR_LIPOPROTEIN"/>
    <property type="match status" value="1"/>
</dbReference>
<reference evidence="12 13" key="1">
    <citation type="journal article" date="2000" name="J. Bacteriol.">
        <title>Transcriptional control of the hydrogen cyanide biosynthetic genes hcnABC by the anaerobic regulator ANR and the quorum-sensing regulators LasR and RhlR in Pseudomonas aeruginosa.</title>
        <authorList>
            <person name="Pessi G."/>
            <person name="Haas D."/>
        </authorList>
    </citation>
    <scope>NUCLEOTIDE SEQUENCE [GENOMIC DNA]</scope>
    <scope>FUNCTION</scope>
    <scope>INDUCTION</scope>
    <source>
        <strain evidence="13">ATCC 15692 / DSM 22644 / CIP 104116 / JCM 14847 / LMG 12228 / 1C / PRS 101 / PAO1</strain>
    </source>
</reference>
<reference evidence="14" key="2">
    <citation type="journal article" date="2000" name="Nature">
        <title>Complete genome sequence of Pseudomonas aeruginosa PAO1, an opportunistic pathogen.</title>
        <authorList>
            <person name="Stover C.K."/>
            <person name="Pham X.-Q.T."/>
            <person name="Erwin A.L."/>
            <person name="Mizoguchi S.D."/>
            <person name="Warrener P."/>
            <person name="Hickey M.J."/>
            <person name="Brinkman F.S.L."/>
            <person name="Hufnagle W.O."/>
            <person name="Kowalik D.J."/>
            <person name="Lagrou M."/>
            <person name="Garber R.L."/>
            <person name="Goltry L."/>
            <person name="Tolentino E."/>
            <person name="Westbrock-Wadman S."/>
            <person name="Yuan Y."/>
            <person name="Brody L.L."/>
            <person name="Coulter S.N."/>
            <person name="Folger K.R."/>
            <person name="Kas A."/>
            <person name="Larbig K."/>
            <person name="Lim R.M."/>
            <person name="Smith K.A."/>
            <person name="Spencer D.H."/>
            <person name="Wong G.K.-S."/>
            <person name="Wu Z."/>
            <person name="Paulsen I.T."/>
            <person name="Reizer J."/>
            <person name="Saier M.H. Jr."/>
            <person name="Hancock R.E.W."/>
            <person name="Lory S."/>
            <person name="Olson M.V."/>
        </authorList>
    </citation>
    <scope>NUCLEOTIDE SEQUENCE [LARGE SCALE GENOMIC DNA]</scope>
    <source>
        <strain>ATCC 15692 / DSM 22644 / CIP 104116 / JCM 14847 / LMG 12228 / 1C / PRS 101 / PAO1</strain>
    </source>
</reference>
<reference evidence="12" key="3">
    <citation type="journal article" date="1968" name="Physiol. Plantarum">
        <title>Growth curves and pH optima for cyanide producing bacteria.</title>
        <authorList>
            <person name="Wissing F."/>
        </authorList>
    </citation>
    <scope>ACTIVITY REGULATION</scope>
    <scope>BIOPHYSICOCHEMICAL PROPERTIES</scope>
</reference>
<reference evidence="12" key="4">
    <citation type="journal article" date="1974" name="J. Bacteriol.">
        <title>Cyanide formation from oxidation of glycine of Pseudomonas species.</title>
        <authorList>
            <person name="Wissing F."/>
        </authorList>
    </citation>
    <scope>FUNCTION</scope>
    <scope>ACTIVITY REGULATION</scope>
    <scope>BIOPHYSICOCHEMICAL PROPERTIES</scope>
    <source>
        <strain evidence="8">C</strain>
    </source>
</reference>
<reference evidence="12" key="5">
    <citation type="journal article" date="1975" name="J. Bacteriol.">
        <title>Cyanide production from glycine by a homogenate from a Pseudomonas species.</title>
        <authorList>
            <person name="Wissing F."/>
        </authorList>
    </citation>
    <scope>BIOPHYSICOCHEMICAL PROPERTIES</scope>
    <scope>SUBCELLULAR LOCATION</scope>
</reference>
<reference evidence="12" key="6">
    <citation type="journal article" date="1977" name="J. Bacteriol.">
        <title>Glycine metabolism by Pseudomonas aeruginosa: hydrogen cyanide biosynthesis.</title>
        <authorList>
            <person name="Castric P.A."/>
        </authorList>
    </citation>
    <scope>FUNCTION</scope>
    <scope>CATALYTIC ACTIVITY</scope>
    <source>
        <strain evidence="6">9-D2</strain>
    </source>
</reference>
<reference evidence="12" key="7">
    <citation type="journal article" date="2000" name="Arch. Microbiol.">
        <title>Mechanism, regulation, and ecological role of bacterial cyanide biosynthesis.</title>
        <authorList>
            <person name="Blumer C."/>
            <person name="Haas D."/>
        </authorList>
    </citation>
    <scope>FUNCTION</scope>
    <scope>CATALYTIC ACTIVITY</scope>
</reference>
<reference evidence="12" key="8">
    <citation type="journal article" date="2001" name="J. Bacteriol.">
        <title>Pseudomonas aeruginosa PAO1 kills Caenorhabditis elegans by cyanide poisoning.</title>
        <authorList>
            <person name="Gallagher L.A."/>
            <person name="Manoil C."/>
        </authorList>
    </citation>
    <scope>FUNCTION</scope>
    <source>
        <strain evidence="5">ATCC 15692 / DSM 22644 / CIP 104116 / JCM 14847 / LMG 12228 / 1C / PRS 101 / PAO1</strain>
    </source>
</reference>
<accession>G3XD12</accession>
<accession>Q7DCD2</accession>
<accession>Q9REV7</accession>
<proteinExistence type="evidence at protein level"/>
<evidence type="ECO:0000255" key="1"/>
<evidence type="ECO:0000255" key="2">
    <source>
        <dbReference type="PROSITE-ProRule" id="PRU00303"/>
    </source>
</evidence>
<evidence type="ECO:0000269" key="3">
    <source>
    </source>
</evidence>
<evidence type="ECO:0000269" key="4">
    <source>
    </source>
</evidence>
<evidence type="ECO:0000269" key="5">
    <source>
    </source>
</evidence>
<evidence type="ECO:0000269" key="6">
    <source>
    </source>
</evidence>
<evidence type="ECO:0000269" key="7">
    <source>
    </source>
</evidence>
<evidence type="ECO:0000269" key="8">
    <source>
    </source>
</evidence>
<evidence type="ECO:0000269" key="9">
    <source ref="3"/>
</evidence>
<evidence type="ECO:0000303" key="10">
    <source>
    </source>
</evidence>
<evidence type="ECO:0000303" key="11">
    <source>
    </source>
</evidence>
<evidence type="ECO:0000305" key="12"/>
<evidence type="ECO:0000312" key="13">
    <source>
        <dbReference type="EMBL" id="AAF21030.1"/>
    </source>
</evidence>
<evidence type="ECO:0000312" key="14">
    <source>
        <dbReference type="EMBL" id="AAG05583.1"/>
    </source>
</evidence>
<feature type="signal peptide" evidence="2">
    <location>
        <begin position="1"/>
        <end position="18"/>
    </location>
</feature>
<feature type="chain" id="PRO_0000419807" description="Hydrogen cyanide synthase subunit HcnC" evidence="2 4">
    <location>
        <begin position="19"/>
        <end position="417"/>
    </location>
</feature>
<feature type="transmembrane region" description="Helical" evidence="1">
    <location>
        <begin position="46"/>
        <end position="66"/>
    </location>
</feature>
<feature type="binding site" evidence="1">
    <location>
        <begin position="7"/>
        <end position="21"/>
    </location>
    <ligand>
        <name>FAD</name>
        <dbReference type="ChEBI" id="CHEBI:57692"/>
    </ligand>
</feature>
<feature type="lipid moiety-binding region" description="N-palmitoyl cysteine" evidence="2">
    <location>
        <position position="19"/>
    </location>
</feature>
<feature type="lipid moiety-binding region" description="S-diacylglycerol cysteine" evidence="2">
    <location>
        <position position="19"/>
    </location>
</feature>
<keyword id="KW-1003">Cell membrane</keyword>
<keyword id="KW-0285">Flavoprotein</keyword>
<keyword id="KW-0449">Lipoprotein</keyword>
<keyword id="KW-0472">Membrane</keyword>
<keyword id="KW-0560">Oxidoreductase</keyword>
<keyword id="KW-0564">Palmitate</keyword>
<keyword id="KW-1185">Reference proteome</keyword>
<keyword id="KW-0732">Signal</keyword>
<keyword id="KW-0812">Transmembrane</keyword>
<keyword id="KW-1133">Transmembrane helix</keyword>
<protein>
    <recommendedName>
        <fullName evidence="14">Hydrogen cyanide synthase subunit HcnC</fullName>
        <shortName evidence="10">HcnC</shortName>
        <ecNumber evidence="3 6">1.4.99.5</ecNumber>
    </recommendedName>
    <alternativeName>
        <fullName evidence="10">Glycine dehydrogenase (cyanide-forming)</fullName>
    </alternativeName>
</protein>
<gene>
    <name evidence="14" type="primary">hcnC</name>
    <name type="ordered locus">PA2195</name>
</gene>